<accession>Q8PJE2</accession>
<organism>
    <name type="scientific">Xanthomonas axonopodis pv. citri (strain 306)</name>
    <dbReference type="NCBI Taxonomy" id="190486"/>
    <lineage>
        <taxon>Bacteria</taxon>
        <taxon>Pseudomonadati</taxon>
        <taxon>Pseudomonadota</taxon>
        <taxon>Gammaproteobacteria</taxon>
        <taxon>Lysobacterales</taxon>
        <taxon>Lysobacteraceae</taxon>
        <taxon>Xanthomonas</taxon>
    </lineage>
</organism>
<comment type="function">
    <text evidence="1">IF-3 binds to the 30S ribosomal subunit and shifts the equilibrium between 70S ribosomes and their 50S and 30S subunits in favor of the free subunits, thus enhancing the availability of 30S subunits on which protein synthesis initiation begins.</text>
</comment>
<comment type="subunit">
    <text evidence="1">Monomer.</text>
</comment>
<comment type="subcellular location">
    <subcellularLocation>
        <location evidence="1">Cytoplasm</location>
    </subcellularLocation>
</comment>
<comment type="similarity">
    <text evidence="1">Belongs to the IF-3 family.</text>
</comment>
<comment type="sequence caution" evidence="3">
    <conflict type="erroneous initiation">
        <sequence resource="EMBL-CDS" id="AAM37442"/>
    </conflict>
</comment>
<feature type="chain" id="PRO_0000177607" description="Translation initiation factor IF-3">
    <location>
        <begin position="1"/>
        <end position="182"/>
    </location>
</feature>
<feature type="region of interest" description="Disordered" evidence="2">
    <location>
        <begin position="1"/>
        <end position="22"/>
    </location>
</feature>
<proteinExistence type="inferred from homology"/>
<sequence>MPLGDCNISTPDNKQNRKNQEIRVPRVRVIGSDGEMVGVLSRDEALAKAEEEGLDLVEIQPQADPPVCKIMDFGKFKFEQQKKANEAKKKTKQVEIKELKFRPVTDEGDYQIKLRNMRRFLEEGDKVKVNIRFRGREMSHQELGREMAARIEADLGDDIVIESRPRLEGRQMVMMIAPKKKV</sequence>
<protein>
    <recommendedName>
        <fullName evidence="1">Translation initiation factor IF-3</fullName>
    </recommendedName>
</protein>
<evidence type="ECO:0000255" key="1">
    <source>
        <dbReference type="HAMAP-Rule" id="MF_00080"/>
    </source>
</evidence>
<evidence type="ECO:0000256" key="2">
    <source>
        <dbReference type="SAM" id="MobiDB-lite"/>
    </source>
</evidence>
<evidence type="ECO:0000305" key="3"/>
<reference key="1">
    <citation type="journal article" date="2002" name="Nature">
        <title>Comparison of the genomes of two Xanthomonas pathogens with differing host specificities.</title>
        <authorList>
            <person name="da Silva A.C.R."/>
            <person name="Ferro J.A."/>
            <person name="Reinach F.C."/>
            <person name="Farah C.S."/>
            <person name="Furlan L.R."/>
            <person name="Quaggio R.B."/>
            <person name="Monteiro-Vitorello C.B."/>
            <person name="Van Sluys M.A."/>
            <person name="Almeida N.F. Jr."/>
            <person name="Alves L.M.C."/>
            <person name="do Amaral A.M."/>
            <person name="Bertolini M.C."/>
            <person name="Camargo L.E.A."/>
            <person name="Camarotte G."/>
            <person name="Cannavan F."/>
            <person name="Cardozo J."/>
            <person name="Chambergo F."/>
            <person name="Ciapina L.P."/>
            <person name="Cicarelli R.M.B."/>
            <person name="Coutinho L.L."/>
            <person name="Cursino-Santos J.R."/>
            <person name="El-Dorry H."/>
            <person name="Faria J.B."/>
            <person name="Ferreira A.J.S."/>
            <person name="Ferreira R.C.C."/>
            <person name="Ferro M.I.T."/>
            <person name="Formighieri E.F."/>
            <person name="Franco M.C."/>
            <person name="Greggio C.C."/>
            <person name="Gruber A."/>
            <person name="Katsuyama A.M."/>
            <person name="Kishi L.T."/>
            <person name="Leite R.P."/>
            <person name="Lemos E.G.M."/>
            <person name="Lemos M.V.F."/>
            <person name="Locali E.C."/>
            <person name="Machado M.A."/>
            <person name="Madeira A.M.B.N."/>
            <person name="Martinez-Rossi N.M."/>
            <person name="Martins E.C."/>
            <person name="Meidanis J."/>
            <person name="Menck C.F.M."/>
            <person name="Miyaki C.Y."/>
            <person name="Moon D.H."/>
            <person name="Moreira L.M."/>
            <person name="Novo M.T.M."/>
            <person name="Okura V.K."/>
            <person name="Oliveira M.C."/>
            <person name="Oliveira V.R."/>
            <person name="Pereira H.A."/>
            <person name="Rossi A."/>
            <person name="Sena J.A.D."/>
            <person name="Silva C."/>
            <person name="de Souza R.F."/>
            <person name="Spinola L.A.F."/>
            <person name="Takita M.A."/>
            <person name="Tamura R.E."/>
            <person name="Teixeira E.C."/>
            <person name="Tezza R.I.D."/>
            <person name="Trindade dos Santos M."/>
            <person name="Truffi D."/>
            <person name="Tsai S.M."/>
            <person name="White F.F."/>
            <person name="Setubal J.C."/>
            <person name="Kitajima J.P."/>
        </authorList>
    </citation>
    <scope>NUCLEOTIDE SEQUENCE [LARGE SCALE GENOMIC DNA]</scope>
    <source>
        <strain>306</strain>
    </source>
</reference>
<gene>
    <name evidence="1" type="primary">infC</name>
    <name type="ordered locus">XAC2593</name>
</gene>
<keyword id="KW-0963">Cytoplasm</keyword>
<keyword id="KW-0396">Initiation factor</keyword>
<keyword id="KW-0648">Protein biosynthesis</keyword>
<dbReference type="EMBL" id="AE008923">
    <property type="protein sequence ID" value="AAM37442.1"/>
    <property type="status" value="ALT_INIT"/>
    <property type="molecule type" value="Genomic_DNA"/>
</dbReference>
<dbReference type="SMR" id="Q8PJE2"/>
<dbReference type="KEGG" id="xac:XAC2593"/>
<dbReference type="eggNOG" id="COG0290">
    <property type="taxonomic scope" value="Bacteria"/>
</dbReference>
<dbReference type="HOGENOM" id="CLU_054919_3_2_6"/>
<dbReference type="Proteomes" id="UP000000576">
    <property type="component" value="Chromosome"/>
</dbReference>
<dbReference type="GO" id="GO:0005829">
    <property type="term" value="C:cytosol"/>
    <property type="evidence" value="ECO:0007669"/>
    <property type="project" value="TreeGrafter"/>
</dbReference>
<dbReference type="GO" id="GO:0016020">
    <property type="term" value="C:membrane"/>
    <property type="evidence" value="ECO:0007669"/>
    <property type="project" value="TreeGrafter"/>
</dbReference>
<dbReference type="GO" id="GO:0043022">
    <property type="term" value="F:ribosome binding"/>
    <property type="evidence" value="ECO:0007669"/>
    <property type="project" value="TreeGrafter"/>
</dbReference>
<dbReference type="GO" id="GO:0003743">
    <property type="term" value="F:translation initiation factor activity"/>
    <property type="evidence" value="ECO:0007669"/>
    <property type="project" value="UniProtKB-UniRule"/>
</dbReference>
<dbReference type="GO" id="GO:0032790">
    <property type="term" value="P:ribosome disassembly"/>
    <property type="evidence" value="ECO:0007669"/>
    <property type="project" value="TreeGrafter"/>
</dbReference>
<dbReference type="FunFam" id="3.10.20.80:FF:000001">
    <property type="entry name" value="Translation initiation factor IF-3"/>
    <property type="match status" value="1"/>
</dbReference>
<dbReference type="FunFam" id="3.30.110.10:FF:000001">
    <property type="entry name" value="Translation initiation factor IF-3"/>
    <property type="match status" value="1"/>
</dbReference>
<dbReference type="Gene3D" id="3.30.110.10">
    <property type="entry name" value="Translation initiation factor 3 (IF-3), C-terminal domain"/>
    <property type="match status" value="1"/>
</dbReference>
<dbReference type="Gene3D" id="3.10.20.80">
    <property type="entry name" value="Translation initiation factor 3 (IF-3), N-terminal domain"/>
    <property type="match status" value="1"/>
</dbReference>
<dbReference type="HAMAP" id="MF_00080">
    <property type="entry name" value="IF_3"/>
    <property type="match status" value="1"/>
</dbReference>
<dbReference type="InterPro" id="IPR036788">
    <property type="entry name" value="T_IF-3_C_sf"/>
</dbReference>
<dbReference type="InterPro" id="IPR036787">
    <property type="entry name" value="T_IF-3_N_sf"/>
</dbReference>
<dbReference type="InterPro" id="IPR019813">
    <property type="entry name" value="Translation_initiation_fac3_CS"/>
</dbReference>
<dbReference type="InterPro" id="IPR001288">
    <property type="entry name" value="Translation_initiation_fac_3"/>
</dbReference>
<dbReference type="InterPro" id="IPR019815">
    <property type="entry name" value="Translation_initiation_fac_3_C"/>
</dbReference>
<dbReference type="InterPro" id="IPR019814">
    <property type="entry name" value="Translation_initiation_fac_3_N"/>
</dbReference>
<dbReference type="NCBIfam" id="TIGR00168">
    <property type="entry name" value="infC"/>
    <property type="match status" value="1"/>
</dbReference>
<dbReference type="PANTHER" id="PTHR10938">
    <property type="entry name" value="TRANSLATION INITIATION FACTOR IF-3"/>
    <property type="match status" value="1"/>
</dbReference>
<dbReference type="PANTHER" id="PTHR10938:SF0">
    <property type="entry name" value="TRANSLATION INITIATION FACTOR IF-3, MITOCHONDRIAL"/>
    <property type="match status" value="1"/>
</dbReference>
<dbReference type="Pfam" id="PF00707">
    <property type="entry name" value="IF3_C"/>
    <property type="match status" value="1"/>
</dbReference>
<dbReference type="Pfam" id="PF05198">
    <property type="entry name" value="IF3_N"/>
    <property type="match status" value="1"/>
</dbReference>
<dbReference type="SUPFAM" id="SSF55200">
    <property type="entry name" value="Translation initiation factor IF3, C-terminal domain"/>
    <property type="match status" value="1"/>
</dbReference>
<dbReference type="SUPFAM" id="SSF54364">
    <property type="entry name" value="Translation initiation factor IF3, N-terminal domain"/>
    <property type="match status" value="1"/>
</dbReference>
<dbReference type="PROSITE" id="PS00938">
    <property type="entry name" value="IF3"/>
    <property type="match status" value="1"/>
</dbReference>
<name>IF3_XANAC</name>